<organism>
    <name type="scientific">Staphylococcus saprophyticus subsp. saprophyticus (strain ATCC 15305 / DSM 20229 / NCIMB 8711 / NCTC 7292 / S-41)</name>
    <dbReference type="NCBI Taxonomy" id="342451"/>
    <lineage>
        <taxon>Bacteria</taxon>
        <taxon>Bacillati</taxon>
        <taxon>Bacillota</taxon>
        <taxon>Bacilli</taxon>
        <taxon>Bacillales</taxon>
        <taxon>Staphylococcaceae</taxon>
        <taxon>Staphylococcus</taxon>
    </lineage>
</organism>
<evidence type="ECO:0000255" key="1">
    <source>
        <dbReference type="HAMAP-Rule" id="MF_00823"/>
    </source>
</evidence>
<evidence type="ECO:0000255" key="2">
    <source>
        <dbReference type="PROSITE-ProRule" id="PRU01137"/>
    </source>
</evidence>
<gene>
    <name evidence="1" type="primary">accA</name>
    <name type="ordered locus">SSP1067</name>
</gene>
<proteinExistence type="inferred from homology"/>
<name>ACCA_STAS1</name>
<feature type="chain" id="PRO_0000223835" description="Acetyl-coenzyme A carboxylase carboxyl transferase subunit alpha">
    <location>
        <begin position="1"/>
        <end position="314"/>
    </location>
</feature>
<feature type="domain" description="CoA carboxyltransferase C-terminal" evidence="2">
    <location>
        <begin position="32"/>
        <end position="289"/>
    </location>
</feature>
<dbReference type="EC" id="2.1.3.15" evidence="1"/>
<dbReference type="EMBL" id="AP008934">
    <property type="protein sequence ID" value="BAE18212.1"/>
    <property type="molecule type" value="Genomic_DNA"/>
</dbReference>
<dbReference type="RefSeq" id="WP_011302909.1">
    <property type="nucleotide sequence ID" value="NZ_MTGA01000038.1"/>
</dbReference>
<dbReference type="SMR" id="Q49YC9"/>
<dbReference type="GeneID" id="3615435"/>
<dbReference type="KEGG" id="ssp:SSP1067"/>
<dbReference type="PATRIC" id="fig|342451.11.peg.1066"/>
<dbReference type="eggNOG" id="COG0825">
    <property type="taxonomic scope" value="Bacteria"/>
</dbReference>
<dbReference type="HOGENOM" id="CLU_015486_0_2_9"/>
<dbReference type="OrthoDB" id="9808023at2"/>
<dbReference type="UniPathway" id="UPA00655">
    <property type="reaction ID" value="UER00711"/>
</dbReference>
<dbReference type="Proteomes" id="UP000006371">
    <property type="component" value="Chromosome"/>
</dbReference>
<dbReference type="GO" id="GO:0009317">
    <property type="term" value="C:acetyl-CoA carboxylase complex"/>
    <property type="evidence" value="ECO:0007669"/>
    <property type="project" value="InterPro"/>
</dbReference>
<dbReference type="GO" id="GO:0003989">
    <property type="term" value="F:acetyl-CoA carboxylase activity"/>
    <property type="evidence" value="ECO:0007669"/>
    <property type="project" value="InterPro"/>
</dbReference>
<dbReference type="GO" id="GO:0005524">
    <property type="term" value="F:ATP binding"/>
    <property type="evidence" value="ECO:0007669"/>
    <property type="project" value="UniProtKB-KW"/>
</dbReference>
<dbReference type="GO" id="GO:0016743">
    <property type="term" value="F:carboxyl- or carbamoyltransferase activity"/>
    <property type="evidence" value="ECO:0007669"/>
    <property type="project" value="UniProtKB-UniRule"/>
</dbReference>
<dbReference type="GO" id="GO:0006633">
    <property type="term" value="P:fatty acid biosynthetic process"/>
    <property type="evidence" value="ECO:0007669"/>
    <property type="project" value="UniProtKB-KW"/>
</dbReference>
<dbReference type="GO" id="GO:2001295">
    <property type="term" value="P:malonyl-CoA biosynthetic process"/>
    <property type="evidence" value="ECO:0007669"/>
    <property type="project" value="UniProtKB-UniRule"/>
</dbReference>
<dbReference type="Gene3D" id="3.90.226.10">
    <property type="entry name" value="2-enoyl-CoA Hydratase, Chain A, domain 1"/>
    <property type="match status" value="1"/>
</dbReference>
<dbReference type="HAMAP" id="MF_00823">
    <property type="entry name" value="AcetylCoA_CT_alpha"/>
    <property type="match status" value="1"/>
</dbReference>
<dbReference type="InterPro" id="IPR001095">
    <property type="entry name" value="Acetyl_CoA_COase_a_su"/>
</dbReference>
<dbReference type="InterPro" id="IPR029045">
    <property type="entry name" value="ClpP/crotonase-like_dom_sf"/>
</dbReference>
<dbReference type="InterPro" id="IPR011763">
    <property type="entry name" value="COA_CT_C"/>
</dbReference>
<dbReference type="NCBIfam" id="TIGR00513">
    <property type="entry name" value="accA"/>
    <property type="match status" value="1"/>
</dbReference>
<dbReference type="NCBIfam" id="NF041504">
    <property type="entry name" value="AccA_sub"/>
    <property type="match status" value="1"/>
</dbReference>
<dbReference type="NCBIfam" id="NF004344">
    <property type="entry name" value="PRK05724.1"/>
    <property type="match status" value="1"/>
</dbReference>
<dbReference type="PANTHER" id="PTHR42853">
    <property type="entry name" value="ACETYL-COENZYME A CARBOXYLASE CARBOXYL TRANSFERASE SUBUNIT ALPHA"/>
    <property type="match status" value="1"/>
</dbReference>
<dbReference type="PANTHER" id="PTHR42853:SF3">
    <property type="entry name" value="ACETYL-COENZYME A CARBOXYLASE CARBOXYL TRANSFERASE SUBUNIT ALPHA, CHLOROPLASTIC"/>
    <property type="match status" value="1"/>
</dbReference>
<dbReference type="Pfam" id="PF03255">
    <property type="entry name" value="ACCA"/>
    <property type="match status" value="1"/>
</dbReference>
<dbReference type="PRINTS" id="PR01069">
    <property type="entry name" value="ACCCTRFRASEA"/>
</dbReference>
<dbReference type="SUPFAM" id="SSF52096">
    <property type="entry name" value="ClpP/crotonase"/>
    <property type="match status" value="1"/>
</dbReference>
<dbReference type="PROSITE" id="PS50989">
    <property type="entry name" value="COA_CT_CTER"/>
    <property type="match status" value="1"/>
</dbReference>
<reference key="1">
    <citation type="journal article" date="2005" name="Proc. Natl. Acad. Sci. U.S.A.">
        <title>Whole genome sequence of Staphylococcus saprophyticus reveals the pathogenesis of uncomplicated urinary tract infection.</title>
        <authorList>
            <person name="Kuroda M."/>
            <person name="Yamashita A."/>
            <person name="Hirakawa H."/>
            <person name="Kumano M."/>
            <person name="Morikawa K."/>
            <person name="Higashide M."/>
            <person name="Maruyama A."/>
            <person name="Inose Y."/>
            <person name="Matoba K."/>
            <person name="Toh H."/>
            <person name="Kuhara S."/>
            <person name="Hattori M."/>
            <person name="Ohta T."/>
        </authorList>
    </citation>
    <scope>NUCLEOTIDE SEQUENCE [LARGE SCALE GENOMIC DNA]</scope>
    <source>
        <strain>ATCC 15305 / DSM 20229 / NCIMB 8711 / NCTC 7292 / S-41</strain>
    </source>
</reference>
<sequence length="314" mass="35345">MLDFEKPLFEIKNKIESLKESQEKNDVDLQEEIDMLEASLARETEKVYTNLKPWDRVQLARLQERPTSLDYIPHIFDSFIELHGDRNYRDDPAMIGGIGYLNGQAVTVVGQQRGKDTKDNIYRNFGMAHPEGYRKALRLMKQAEKFNRPIFSFIDTKGAYPGKAAEERGQSESIARNLVEMASLTVPVISIVIGEGGSGGALGLGITNRILMLENSTYSVISPEGASALLWKDSNLAKIAAETMKITAEDLYELNIADEVIKEPLGGAHHDVETQAQSIKRTFESHLSELNQLTQEELVEDRYQKFRTIGSYTE</sequence>
<accession>Q49YC9</accession>
<keyword id="KW-0067">ATP-binding</keyword>
<keyword id="KW-0963">Cytoplasm</keyword>
<keyword id="KW-0275">Fatty acid biosynthesis</keyword>
<keyword id="KW-0276">Fatty acid metabolism</keyword>
<keyword id="KW-0444">Lipid biosynthesis</keyword>
<keyword id="KW-0443">Lipid metabolism</keyword>
<keyword id="KW-0547">Nucleotide-binding</keyword>
<keyword id="KW-1185">Reference proteome</keyword>
<keyword id="KW-0808">Transferase</keyword>
<comment type="function">
    <text evidence="1">Component of the acetyl coenzyme A carboxylase (ACC) complex. First, biotin carboxylase catalyzes the carboxylation of biotin on its carrier protein (BCCP) and then the CO(2) group is transferred by the carboxyltransferase to acetyl-CoA to form malonyl-CoA.</text>
</comment>
<comment type="catalytic activity">
    <reaction evidence="1">
        <text>N(6)-carboxybiotinyl-L-lysyl-[protein] + acetyl-CoA = N(6)-biotinyl-L-lysyl-[protein] + malonyl-CoA</text>
        <dbReference type="Rhea" id="RHEA:54728"/>
        <dbReference type="Rhea" id="RHEA-COMP:10505"/>
        <dbReference type="Rhea" id="RHEA-COMP:10506"/>
        <dbReference type="ChEBI" id="CHEBI:57288"/>
        <dbReference type="ChEBI" id="CHEBI:57384"/>
        <dbReference type="ChEBI" id="CHEBI:83144"/>
        <dbReference type="ChEBI" id="CHEBI:83145"/>
        <dbReference type="EC" id="2.1.3.15"/>
    </reaction>
</comment>
<comment type="pathway">
    <text evidence="1">Lipid metabolism; malonyl-CoA biosynthesis; malonyl-CoA from acetyl-CoA: step 1/1.</text>
</comment>
<comment type="subunit">
    <text evidence="1">Acetyl-CoA carboxylase is a heterohexamer composed of biotin carboxyl carrier protein (AccB), biotin carboxylase (AccC) and two subunits each of ACCase subunit alpha (AccA) and ACCase subunit beta (AccD).</text>
</comment>
<comment type="subcellular location">
    <subcellularLocation>
        <location evidence="1">Cytoplasm</location>
    </subcellularLocation>
</comment>
<comment type="similarity">
    <text evidence="1">Belongs to the AccA family.</text>
</comment>
<protein>
    <recommendedName>
        <fullName evidence="1">Acetyl-coenzyme A carboxylase carboxyl transferase subunit alpha</fullName>
        <shortName evidence="1">ACCase subunit alpha</shortName>
        <shortName evidence="1">Acetyl-CoA carboxylase carboxyltransferase subunit alpha</shortName>
        <ecNumber evidence="1">2.1.3.15</ecNumber>
    </recommendedName>
</protein>